<name>GL22_ORYSJ</name>
<keyword id="KW-0052">Apoplast</keyword>
<keyword id="KW-1015">Disulfide bond</keyword>
<keyword id="KW-0325">Glycoprotein</keyword>
<keyword id="KW-0464">Manganese</keyword>
<keyword id="KW-0479">Metal-binding</keyword>
<keyword id="KW-1185">Reference proteome</keyword>
<keyword id="KW-0964">Secreted</keyword>
<keyword id="KW-0732">Signal</keyword>
<protein>
    <recommendedName>
        <fullName>Putative germin-like protein 2-2</fullName>
    </recommendedName>
</protein>
<accession>Q6K5P9</accession>
<accession>A0A0P0VJ72</accession>
<accession>Q0E149</accession>
<proteinExistence type="inferred from homology"/>
<dbReference type="EMBL" id="AP004864">
    <property type="protein sequence ID" value="BAD21899.1"/>
    <property type="molecule type" value="Genomic_DNA"/>
</dbReference>
<dbReference type="EMBL" id="AP005317">
    <property type="protein sequence ID" value="BAD22076.1"/>
    <property type="molecule type" value="Genomic_DNA"/>
</dbReference>
<dbReference type="EMBL" id="AP008208">
    <property type="protein sequence ID" value="BAF08789.2"/>
    <property type="status" value="ALT_SEQ"/>
    <property type="molecule type" value="Genomic_DNA"/>
</dbReference>
<dbReference type="EMBL" id="AP014958">
    <property type="protein sequence ID" value="BAS78743.1"/>
    <property type="molecule type" value="Genomic_DNA"/>
</dbReference>
<dbReference type="EMBL" id="CM000139">
    <property type="protein sequence ID" value="EAZ23099.1"/>
    <property type="molecule type" value="Genomic_DNA"/>
</dbReference>
<dbReference type="RefSeq" id="XP_015624077.1">
    <property type="nucleotide sequence ID" value="XM_015768591.1"/>
</dbReference>
<dbReference type="SMR" id="Q6K5P9"/>
<dbReference type="FunCoup" id="Q6K5P9">
    <property type="interactions" value="44"/>
</dbReference>
<dbReference type="STRING" id="39947.Q6K5P9"/>
<dbReference type="PaxDb" id="39947-Q6K5P9"/>
<dbReference type="EnsemblPlants" id="Os02t0491700-00">
    <property type="protein sequence ID" value="Os02t0491700-00"/>
    <property type="gene ID" value="Os02g0491700"/>
</dbReference>
<dbReference type="Gramene" id="Os02t0491700-00">
    <property type="protein sequence ID" value="Os02t0491700-00"/>
    <property type="gene ID" value="Os02g0491700"/>
</dbReference>
<dbReference type="KEGG" id="dosa:Os02g0491700"/>
<dbReference type="eggNOG" id="ENOG502QQ4A">
    <property type="taxonomic scope" value="Eukaryota"/>
</dbReference>
<dbReference type="HOGENOM" id="CLU_015790_0_0_1"/>
<dbReference type="InParanoid" id="Q6K5P9"/>
<dbReference type="OMA" id="VTCFHAT"/>
<dbReference type="OrthoDB" id="1921208at2759"/>
<dbReference type="Proteomes" id="UP000000763">
    <property type="component" value="Chromosome 2"/>
</dbReference>
<dbReference type="Proteomes" id="UP000007752">
    <property type="component" value="Chromosome 2"/>
</dbReference>
<dbReference type="Proteomes" id="UP000059680">
    <property type="component" value="Chromosome 2"/>
</dbReference>
<dbReference type="GO" id="GO:0048046">
    <property type="term" value="C:apoplast"/>
    <property type="evidence" value="ECO:0007669"/>
    <property type="project" value="UniProtKB-SubCell"/>
</dbReference>
<dbReference type="GO" id="GO:0030145">
    <property type="term" value="F:manganese ion binding"/>
    <property type="evidence" value="ECO:0007669"/>
    <property type="project" value="InterPro"/>
</dbReference>
<dbReference type="CDD" id="cd02241">
    <property type="entry name" value="cupin_OxOx"/>
    <property type="match status" value="1"/>
</dbReference>
<dbReference type="FunFam" id="2.60.120.10:FF:000005">
    <property type="entry name" value="Germin-like protein subfamily 1 member 8"/>
    <property type="match status" value="1"/>
</dbReference>
<dbReference type="Gene3D" id="2.60.120.10">
    <property type="entry name" value="Jelly Rolls"/>
    <property type="match status" value="1"/>
</dbReference>
<dbReference type="InterPro" id="IPR006045">
    <property type="entry name" value="Cupin_1"/>
</dbReference>
<dbReference type="InterPro" id="IPR001929">
    <property type="entry name" value="Germin"/>
</dbReference>
<dbReference type="InterPro" id="IPR019780">
    <property type="entry name" value="Germin_Mn-BS"/>
</dbReference>
<dbReference type="InterPro" id="IPR014710">
    <property type="entry name" value="RmlC-like_jellyroll"/>
</dbReference>
<dbReference type="InterPro" id="IPR011051">
    <property type="entry name" value="RmlC_Cupin_sf"/>
</dbReference>
<dbReference type="PANTHER" id="PTHR31238">
    <property type="entry name" value="GERMIN-LIKE PROTEIN SUBFAMILY 3 MEMBER 3"/>
    <property type="match status" value="1"/>
</dbReference>
<dbReference type="Pfam" id="PF00190">
    <property type="entry name" value="Cupin_1"/>
    <property type="match status" value="1"/>
</dbReference>
<dbReference type="PRINTS" id="PR00325">
    <property type="entry name" value="GERMIN"/>
</dbReference>
<dbReference type="SMART" id="SM00835">
    <property type="entry name" value="Cupin_1"/>
    <property type="match status" value="1"/>
</dbReference>
<dbReference type="SUPFAM" id="SSF51182">
    <property type="entry name" value="RmlC-like cupins"/>
    <property type="match status" value="1"/>
</dbReference>
<dbReference type="PROSITE" id="PS00725">
    <property type="entry name" value="GERMIN"/>
    <property type="match status" value="1"/>
</dbReference>
<comment type="function">
    <text>May play a role in plant defense. Probably has no oxalate oxidase activity even if the active site is conserved.</text>
</comment>
<comment type="subunit">
    <text evidence="1">Oligomer (believed to be a pentamer but probably hexamer).</text>
</comment>
<comment type="subcellular location">
    <subcellularLocation>
        <location evidence="1">Secreted</location>
        <location evidence="1">Extracellular space</location>
        <location evidence="1">Apoplast</location>
    </subcellularLocation>
</comment>
<comment type="similarity">
    <text evidence="3">Belongs to the germin family.</text>
</comment>
<comment type="sequence caution" evidence="3">
    <conflict type="erroneous gene model prediction">
        <sequence resource="EMBL-CDS" id="BAF08789"/>
    </conflict>
</comment>
<gene>
    <name type="ordered locus">Os02g0491700</name>
    <name type="ordered locus">LOC_Os02g29010</name>
    <name type="ORF">OsJ_006582</name>
    <name type="ORF">OSJNBa0048K16.35</name>
    <name type="ORF">P0579G08.11</name>
</gene>
<feature type="signal peptide" evidence="2">
    <location>
        <begin position="1"/>
        <end position="28"/>
    </location>
</feature>
<feature type="chain" id="PRO_0000365499" description="Putative germin-like protein 2-2">
    <location>
        <begin position="29"/>
        <end position="223"/>
    </location>
</feature>
<feature type="domain" description="Cupin type-1" evidence="2">
    <location>
        <begin position="67"/>
        <end position="217"/>
    </location>
</feature>
<feature type="binding site" evidence="1">
    <location>
        <position position="115"/>
    </location>
    <ligand>
        <name>Mn(2+)</name>
        <dbReference type="ChEBI" id="CHEBI:29035"/>
    </ligand>
</feature>
<feature type="binding site" evidence="1">
    <location>
        <position position="117"/>
    </location>
    <ligand>
        <name>Mn(2+)</name>
        <dbReference type="ChEBI" id="CHEBI:29035"/>
    </ligand>
</feature>
<feature type="binding site" evidence="1">
    <location>
        <position position="122"/>
    </location>
    <ligand>
        <name>Mn(2+)</name>
        <dbReference type="ChEBI" id="CHEBI:29035"/>
    </ligand>
</feature>
<feature type="binding site" evidence="1">
    <location>
        <position position="163"/>
    </location>
    <ligand>
        <name>Mn(2+)</name>
        <dbReference type="ChEBI" id="CHEBI:29035"/>
    </ligand>
</feature>
<feature type="glycosylation site" description="N-linked (GlcNAc...) asparagine" evidence="2">
    <location>
        <position position="74"/>
    </location>
</feature>
<feature type="glycosylation site" description="N-linked (GlcNAc...) asparagine" evidence="2">
    <location>
        <position position="82"/>
    </location>
</feature>
<feature type="glycosylation site" description="N-linked (GlcNAc...) asparagine" evidence="2">
    <location>
        <position position="168"/>
    </location>
</feature>
<feature type="disulfide bond" evidence="1">
    <location>
        <begin position="38"/>
        <end position="53"/>
    </location>
</feature>
<evidence type="ECO:0000250" key="1"/>
<evidence type="ECO:0000255" key="2"/>
<evidence type="ECO:0000305" key="3"/>
<reference key="1">
    <citation type="journal article" date="2005" name="Nature">
        <title>The map-based sequence of the rice genome.</title>
        <authorList>
            <consortium name="International rice genome sequencing project (IRGSP)"/>
        </authorList>
    </citation>
    <scope>NUCLEOTIDE SEQUENCE [LARGE SCALE GENOMIC DNA]</scope>
    <source>
        <strain>cv. Nipponbare</strain>
    </source>
</reference>
<reference key="2">
    <citation type="journal article" date="2008" name="Nucleic Acids Res.">
        <title>The rice annotation project database (RAP-DB): 2008 update.</title>
        <authorList>
            <consortium name="The rice annotation project (RAP)"/>
        </authorList>
    </citation>
    <scope>GENOME REANNOTATION</scope>
    <source>
        <strain>cv. Nipponbare</strain>
    </source>
</reference>
<reference key="3">
    <citation type="journal article" date="2013" name="Rice">
        <title>Improvement of the Oryza sativa Nipponbare reference genome using next generation sequence and optical map data.</title>
        <authorList>
            <person name="Kawahara Y."/>
            <person name="de la Bastide M."/>
            <person name="Hamilton J.P."/>
            <person name="Kanamori H."/>
            <person name="McCombie W.R."/>
            <person name="Ouyang S."/>
            <person name="Schwartz D.C."/>
            <person name="Tanaka T."/>
            <person name="Wu J."/>
            <person name="Zhou S."/>
            <person name="Childs K.L."/>
            <person name="Davidson R.M."/>
            <person name="Lin H."/>
            <person name="Quesada-Ocampo L."/>
            <person name="Vaillancourt B."/>
            <person name="Sakai H."/>
            <person name="Lee S.S."/>
            <person name="Kim J."/>
            <person name="Numa H."/>
            <person name="Itoh T."/>
            <person name="Buell C.R."/>
            <person name="Matsumoto T."/>
        </authorList>
    </citation>
    <scope>GENOME REANNOTATION</scope>
    <source>
        <strain>cv. Nipponbare</strain>
    </source>
</reference>
<reference key="4">
    <citation type="journal article" date="2005" name="PLoS Biol.">
        <title>The genomes of Oryza sativa: a history of duplications.</title>
        <authorList>
            <person name="Yu J."/>
            <person name="Wang J."/>
            <person name="Lin W."/>
            <person name="Li S."/>
            <person name="Li H."/>
            <person name="Zhou J."/>
            <person name="Ni P."/>
            <person name="Dong W."/>
            <person name="Hu S."/>
            <person name="Zeng C."/>
            <person name="Zhang J."/>
            <person name="Zhang Y."/>
            <person name="Li R."/>
            <person name="Xu Z."/>
            <person name="Li S."/>
            <person name="Li X."/>
            <person name="Zheng H."/>
            <person name="Cong L."/>
            <person name="Lin L."/>
            <person name="Yin J."/>
            <person name="Geng J."/>
            <person name="Li G."/>
            <person name="Shi J."/>
            <person name="Liu J."/>
            <person name="Lv H."/>
            <person name="Li J."/>
            <person name="Wang J."/>
            <person name="Deng Y."/>
            <person name="Ran L."/>
            <person name="Shi X."/>
            <person name="Wang X."/>
            <person name="Wu Q."/>
            <person name="Li C."/>
            <person name="Ren X."/>
            <person name="Wang J."/>
            <person name="Wang X."/>
            <person name="Li D."/>
            <person name="Liu D."/>
            <person name="Zhang X."/>
            <person name="Ji Z."/>
            <person name="Zhao W."/>
            <person name="Sun Y."/>
            <person name="Zhang Z."/>
            <person name="Bao J."/>
            <person name="Han Y."/>
            <person name="Dong L."/>
            <person name="Ji J."/>
            <person name="Chen P."/>
            <person name="Wu S."/>
            <person name="Liu J."/>
            <person name="Xiao Y."/>
            <person name="Bu D."/>
            <person name="Tan J."/>
            <person name="Yang L."/>
            <person name="Ye C."/>
            <person name="Zhang J."/>
            <person name="Xu J."/>
            <person name="Zhou Y."/>
            <person name="Yu Y."/>
            <person name="Zhang B."/>
            <person name="Zhuang S."/>
            <person name="Wei H."/>
            <person name="Liu B."/>
            <person name="Lei M."/>
            <person name="Yu H."/>
            <person name="Li Y."/>
            <person name="Xu H."/>
            <person name="Wei S."/>
            <person name="He X."/>
            <person name="Fang L."/>
            <person name="Zhang Z."/>
            <person name="Zhang Y."/>
            <person name="Huang X."/>
            <person name="Su Z."/>
            <person name="Tong W."/>
            <person name="Li J."/>
            <person name="Tong Z."/>
            <person name="Li S."/>
            <person name="Ye J."/>
            <person name="Wang L."/>
            <person name="Fang L."/>
            <person name="Lei T."/>
            <person name="Chen C.-S."/>
            <person name="Chen H.-C."/>
            <person name="Xu Z."/>
            <person name="Li H."/>
            <person name="Huang H."/>
            <person name="Zhang F."/>
            <person name="Xu H."/>
            <person name="Li N."/>
            <person name="Zhao C."/>
            <person name="Li S."/>
            <person name="Dong L."/>
            <person name="Huang Y."/>
            <person name="Li L."/>
            <person name="Xi Y."/>
            <person name="Qi Q."/>
            <person name="Li W."/>
            <person name="Zhang B."/>
            <person name="Hu W."/>
            <person name="Zhang Y."/>
            <person name="Tian X."/>
            <person name="Jiao Y."/>
            <person name="Liang X."/>
            <person name="Jin J."/>
            <person name="Gao L."/>
            <person name="Zheng W."/>
            <person name="Hao B."/>
            <person name="Liu S.-M."/>
            <person name="Wang W."/>
            <person name="Yuan L."/>
            <person name="Cao M."/>
            <person name="McDermott J."/>
            <person name="Samudrala R."/>
            <person name="Wang J."/>
            <person name="Wong G.K.-S."/>
            <person name="Yang H."/>
        </authorList>
    </citation>
    <scope>NUCLEOTIDE SEQUENCE [LARGE SCALE GENOMIC DNA]</scope>
    <source>
        <strain>cv. Nipponbare</strain>
    </source>
</reference>
<sequence length="223" mass="23657">MAAVGACFLQQLAVVALLALWCSHGAIASDPGLLQDFCVVDKMSQVRVNGFPCKDAKDVVAGDFFFSGLHMAGNTTNKQGSNVTTVNVAQIPGLNTMGVSLVRIDYAPNGLNPPHTHPRATEIPTVLEGSLYVGFVISNPENKLFTKVLNKGDVFVFPQGLVHFQFNNGTNNAVALAALSSQNPGVITVGNAVFGSKPSISDDILAKAFQVDKNIIDRIQAQF</sequence>
<organism>
    <name type="scientific">Oryza sativa subsp. japonica</name>
    <name type="common">Rice</name>
    <dbReference type="NCBI Taxonomy" id="39947"/>
    <lineage>
        <taxon>Eukaryota</taxon>
        <taxon>Viridiplantae</taxon>
        <taxon>Streptophyta</taxon>
        <taxon>Embryophyta</taxon>
        <taxon>Tracheophyta</taxon>
        <taxon>Spermatophyta</taxon>
        <taxon>Magnoliopsida</taxon>
        <taxon>Liliopsida</taxon>
        <taxon>Poales</taxon>
        <taxon>Poaceae</taxon>
        <taxon>BOP clade</taxon>
        <taxon>Oryzoideae</taxon>
        <taxon>Oryzeae</taxon>
        <taxon>Oryzinae</taxon>
        <taxon>Oryza</taxon>
        <taxon>Oryza sativa</taxon>
    </lineage>
</organism>